<feature type="chain" id="PRO_0000051395" description="WD repeat-containing protein 46">
    <location>
        <begin position="1"/>
        <end position="610"/>
    </location>
</feature>
<feature type="repeat" description="WD 1">
    <location>
        <begin position="193"/>
        <end position="234"/>
    </location>
</feature>
<feature type="repeat" description="WD 2">
    <location>
        <begin position="235"/>
        <end position="272"/>
    </location>
</feature>
<feature type="repeat" description="WD 3">
    <location>
        <begin position="274"/>
        <end position="312"/>
    </location>
</feature>
<feature type="repeat" description="WD 4">
    <location>
        <begin position="315"/>
        <end position="354"/>
    </location>
</feature>
<feature type="repeat" description="WD 5">
    <location>
        <begin position="357"/>
        <end position="396"/>
    </location>
</feature>
<feature type="repeat" description="WD 6">
    <location>
        <begin position="399"/>
        <end position="436"/>
    </location>
</feature>
<feature type="region of interest" description="Disordered" evidence="1">
    <location>
        <begin position="1"/>
        <end position="103"/>
    </location>
</feature>
<feature type="region of interest" description="Disordered" evidence="1">
    <location>
        <begin position="538"/>
        <end position="610"/>
    </location>
</feature>
<feature type="compositionally biased region" description="Basic and acidic residues" evidence="1">
    <location>
        <begin position="7"/>
        <end position="19"/>
    </location>
</feature>
<feature type="compositionally biased region" description="Basic residues" evidence="1">
    <location>
        <begin position="65"/>
        <end position="77"/>
    </location>
</feature>
<feature type="compositionally biased region" description="Basic and acidic residues" evidence="1">
    <location>
        <begin position="572"/>
        <end position="582"/>
    </location>
</feature>
<feature type="modified residue" description="Phosphoserine" evidence="11 12 13 14">
    <location>
        <position position="41"/>
    </location>
</feature>
<feature type="sequence variant" id="VAR_053433" description="In dbSNP:rs3130257." evidence="3 4 7">
    <original>T</original>
    <variation>A</variation>
    <location>
        <position position="94"/>
    </location>
</feature>
<feature type="sequence variant" id="VAR_053434" description="In dbSNP:rs34704405.">
    <original>S</original>
    <variation>Y</variation>
    <location>
        <position position="124"/>
    </location>
</feature>
<feature type="sequence variant" id="VAR_022025" description="In dbSNP:rs14398." evidence="2">
    <original>V</original>
    <variation>A</variation>
    <location>
        <position position="341"/>
    </location>
</feature>
<dbReference type="EMBL" id="AF447870">
    <property type="protein sequence ID" value="AAQ04645.1"/>
    <property type="molecule type" value="mRNA"/>
</dbReference>
<dbReference type="EMBL" id="AL662820">
    <property type="status" value="NOT_ANNOTATED_CDS"/>
    <property type="molecule type" value="Genomic_DNA"/>
</dbReference>
<dbReference type="EMBL" id="AL662827">
    <property type="status" value="NOT_ANNOTATED_CDS"/>
    <property type="molecule type" value="Genomic_DNA"/>
</dbReference>
<dbReference type="EMBL" id="AL844527">
    <property type="status" value="NOT_ANNOTATED_CDS"/>
    <property type="molecule type" value="Genomic_DNA"/>
</dbReference>
<dbReference type="EMBL" id="BX000343">
    <property type="status" value="NOT_ANNOTATED_CDS"/>
    <property type="molecule type" value="Genomic_DNA"/>
</dbReference>
<dbReference type="EMBL" id="Z97184">
    <property type="protein sequence ID" value="CAB09994.2"/>
    <property type="molecule type" value="Genomic_DNA"/>
</dbReference>
<dbReference type="EMBL" id="AL031228">
    <property type="protein sequence ID" value="CAB09994.2"/>
    <property type="status" value="JOINED"/>
    <property type="molecule type" value="Genomic_DNA"/>
</dbReference>
<dbReference type="EMBL" id="BC000388">
    <property type="protein sequence ID" value="AAH00388.1"/>
    <property type="molecule type" value="mRNA"/>
</dbReference>
<dbReference type="CCDS" id="CCDS4772.1"/>
<dbReference type="RefSeq" id="NP_001157739.1">
    <property type="nucleotide sequence ID" value="NM_001164267.1"/>
</dbReference>
<dbReference type="RefSeq" id="NP_005443.3">
    <property type="nucleotide sequence ID" value="NM_005452.5"/>
</dbReference>
<dbReference type="PDB" id="7MQ8">
    <property type="method" value="EM"/>
    <property type="resolution" value="3.60 A"/>
    <property type="chains" value="LW=1-610"/>
</dbReference>
<dbReference type="PDB" id="7MQ9">
    <property type="method" value="EM"/>
    <property type="resolution" value="3.87 A"/>
    <property type="chains" value="LW=1-610"/>
</dbReference>
<dbReference type="PDB" id="7MQA">
    <property type="method" value="EM"/>
    <property type="resolution" value="2.70 A"/>
    <property type="chains" value="LW=1-610"/>
</dbReference>
<dbReference type="PDBsum" id="7MQ8"/>
<dbReference type="PDBsum" id="7MQ9"/>
<dbReference type="PDBsum" id="7MQA"/>
<dbReference type="EMDB" id="EMD-23936"/>
<dbReference type="EMDB" id="EMD-23937"/>
<dbReference type="EMDB" id="EMD-23938"/>
<dbReference type="SMR" id="O15213"/>
<dbReference type="BioGRID" id="114694">
    <property type="interactions" value="182"/>
</dbReference>
<dbReference type="ComplexPortal" id="CPX-2511">
    <property type="entry name" value="Small ribosomal subunit processome"/>
</dbReference>
<dbReference type="FunCoup" id="O15213">
    <property type="interactions" value="2218"/>
</dbReference>
<dbReference type="IntAct" id="O15213">
    <property type="interactions" value="121"/>
</dbReference>
<dbReference type="MINT" id="O15213"/>
<dbReference type="STRING" id="9606.ENSP00000363746"/>
<dbReference type="iPTMnet" id="O15213"/>
<dbReference type="PhosphoSitePlus" id="O15213"/>
<dbReference type="SwissPalm" id="O15213"/>
<dbReference type="BioMuta" id="WDR46"/>
<dbReference type="jPOST" id="O15213"/>
<dbReference type="MassIVE" id="O15213"/>
<dbReference type="PaxDb" id="9606-ENSP00000363746"/>
<dbReference type="PeptideAtlas" id="O15213"/>
<dbReference type="ProteomicsDB" id="48513"/>
<dbReference type="Pumba" id="O15213"/>
<dbReference type="Antibodypedia" id="29045">
    <property type="antibodies" value="60 antibodies from 20 providers"/>
</dbReference>
<dbReference type="DNASU" id="9277"/>
<dbReference type="Ensembl" id="ENST00000374617.9">
    <property type="protein sequence ID" value="ENSP00000363746.4"/>
    <property type="gene ID" value="ENSG00000227057.10"/>
</dbReference>
<dbReference type="Ensembl" id="ENST00000383208.8">
    <property type="protein sequence ID" value="ENSP00000372695.4"/>
    <property type="gene ID" value="ENSG00000206284.8"/>
</dbReference>
<dbReference type="Ensembl" id="ENST00000432609.6">
    <property type="protein sequence ID" value="ENSP00000402869.2"/>
    <property type="gene ID" value="ENSG00000236222.8"/>
</dbReference>
<dbReference type="Ensembl" id="ENST00000432933.6">
    <property type="protein sequence ID" value="ENSP00000399454.2"/>
    <property type="gene ID" value="ENSG00000204221.11"/>
</dbReference>
<dbReference type="Ensembl" id="ENST00000457382.6">
    <property type="protein sequence ID" value="ENSP00000405614.2"/>
    <property type="gene ID" value="ENSG00000226916.8"/>
</dbReference>
<dbReference type="GeneID" id="9277"/>
<dbReference type="KEGG" id="hsa:9277"/>
<dbReference type="MANE-Select" id="ENST00000374617.9">
    <property type="protein sequence ID" value="ENSP00000363746.4"/>
    <property type="RefSeq nucleotide sequence ID" value="NM_005452.6"/>
    <property type="RefSeq protein sequence ID" value="NP_005443.3"/>
</dbReference>
<dbReference type="UCSC" id="uc003ods.4">
    <property type="organism name" value="human"/>
</dbReference>
<dbReference type="AGR" id="HGNC:13923"/>
<dbReference type="CTD" id="9277"/>
<dbReference type="DisGeNET" id="9277"/>
<dbReference type="GeneCards" id="WDR46"/>
<dbReference type="HGNC" id="HGNC:13923">
    <property type="gene designation" value="WDR46"/>
</dbReference>
<dbReference type="HPA" id="ENSG00000227057">
    <property type="expression patterns" value="Low tissue specificity"/>
</dbReference>
<dbReference type="MIM" id="611440">
    <property type="type" value="gene"/>
</dbReference>
<dbReference type="neXtProt" id="NX_O15213"/>
<dbReference type="OpenTargets" id="ENSG00000227057"/>
<dbReference type="PharmGKB" id="PA25924"/>
<dbReference type="VEuPathDB" id="HostDB:ENSG00000227057"/>
<dbReference type="eggNOG" id="KOG1272">
    <property type="taxonomic scope" value="Eukaryota"/>
</dbReference>
<dbReference type="GeneTree" id="ENSGT00390000007075"/>
<dbReference type="HOGENOM" id="CLU_022996_2_0_1"/>
<dbReference type="InParanoid" id="O15213"/>
<dbReference type="OMA" id="EFLPYHW"/>
<dbReference type="OrthoDB" id="10251154at2759"/>
<dbReference type="PAN-GO" id="O15213">
    <property type="GO annotations" value="3 GO annotations based on evolutionary models"/>
</dbReference>
<dbReference type="PhylomeDB" id="O15213"/>
<dbReference type="TreeFam" id="TF300861"/>
<dbReference type="PathwayCommons" id="O15213"/>
<dbReference type="Reactome" id="R-HSA-6790901">
    <property type="pathway name" value="rRNA modification in the nucleus and cytosol"/>
</dbReference>
<dbReference type="Reactome" id="R-HSA-6791226">
    <property type="pathway name" value="Major pathway of rRNA processing in the nucleolus and cytosol"/>
</dbReference>
<dbReference type="SignaLink" id="O15213"/>
<dbReference type="BioGRID-ORCS" id="9277">
    <property type="hits" value="597 hits in 1155 CRISPR screens"/>
</dbReference>
<dbReference type="CD-CODE" id="91857CE7">
    <property type="entry name" value="Nucleolus"/>
</dbReference>
<dbReference type="ChiTaRS" id="WDR46">
    <property type="organism name" value="human"/>
</dbReference>
<dbReference type="GeneWiki" id="WDR46"/>
<dbReference type="GenomeRNAi" id="9277"/>
<dbReference type="Pharos" id="O15213">
    <property type="development level" value="Tbio"/>
</dbReference>
<dbReference type="PRO" id="PR:O15213"/>
<dbReference type="Proteomes" id="UP000005640">
    <property type="component" value="Chromosome 6"/>
</dbReference>
<dbReference type="RNAct" id="O15213">
    <property type="molecule type" value="protein"/>
</dbReference>
<dbReference type="Bgee" id="ENSG00000227057">
    <property type="expression patterns" value="Expressed in granulocyte and 95 other cell types or tissues"/>
</dbReference>
<dbReference type="ExpressionAtlas" id="O15213">
    <property type="expression patterns" value="baseline and differential"/>
</dbReference>
<dbReference type="GO" id="GO:0005730">
    <property type="term" value="C:nucleolus"/>
    <property type="evidence" value="ECO:0000314"/>
    <property type="project" value="HPA"/>
</dbReference>
<dbReference type="GO" id="GO:0005654">
    <property type="term" value="C:nucleoplasm"/>
    <property type="evidence" value="ECO:0000304"/>
    <property type="project" value="Reactome"/>
</dbReference>
<dbReference type="GO" id="GO:0032040">
    <property type="term" value="C:small-subunit processome"/>
    <property type="evidence" value="ECO:0000314"/>
    <property type="project" value="UniProtKB"/>
</dbReference>
<dbReference type="GO" id="GO:0003723">
    <property type="term" value="F:RNA binding"/>
    <property type="evidence" value="ECO:0007005"/>
    <property type="project" value="UniProtKB"/>
</dbReference>
<dbReference type="GO" id="GO:0000462">
    <property type="term" value="P:maturation of SSU-rRNA from tricistronic rRNA transcript (SSU-rRNA, 5.8S rRNA, LSU-rRNA)"/>
    <property type="evidence" value="ECO:0000318"/>
    <property type="project" value="GO_Central"/>
</dbReference>
<dbReference type="GO" id="GO:0042274">
    <property type="term" value="P:ribosomal small subunit biogenesis"/>
    <property type="evidence" value="ECO:0000314"/>
    <property type="project" value="UniProtKB"/>
</dbReference>
<dbReference type="FunFam" id="2.130.10.10:FF:000128">
    <property type="entry name" value="WD repeat domain 46"/>
    <property type="match status" value="1"/>
</dbReference>
<dbReference type="Gene3D" id="2.130.10.10">
    <property type="entry name" value="YVTN repeat-like/Quinoprotein amine dehydrogenase"/>
    <property type="match status" value="1"/>
</dbReference>
<dbReference type="InterPro" id="IPR012952">
    <property type="entry name" value="BING4_C_dom"/>
</dbReference>
<dbReference type="InterPro" id="IPR015943">
    <property type="entry name" value="WD40/YVTN_repeat-like_dom_sf"/>
</dbReference>
<dbReference type="InterPro" id="IPR036322">
    <property type="entry name" value="WD40_repeat_dom_sf"/>
</dbReference>
<dbReference type="InterPro" id="IPR001680">
    <property type="entry name" value="WD40_rpt"/>
</dbReference>
<dbReference type="InterPro" id="IPR040315">
    <property type="entry name" value="WDR46/Utp7"/>
</dbReference>
<dbReference type="PANTHER" id="PTHR14085:SF3">
    <property type="entry name" value="WD REPEAT-CONTAINING PROTEIN 46"/>
    <property type="match status" value="1"/>
</dbReference>
<dbReference type="PANTHER" id="PTHR14085">
    <property type="entry name" value="WD-REPEAT PROTEIN BING4"/>
    <property type="match status" value="1"/>
</dbReference>
<dbReference type="Pfam" id="PF08149">
    <property type="entry name" value="BING4CT"/>
    <property type="match status" value="1"/>
</dbReference>
<dbReference type="Pfam" id="PF00400">
    <property type="entry name" value="WD40"/>
    <property type="match status" value="1"/>
</dbReference>
<dbReference type="SMART" id="SM01033">
    <property type="entry name" value="BING4CT"/>
    <property type="match status" value="1"/>
</dbReference>
<dbReference type="SMART" id="SM00320">
    <property type="entry name" value="WD40"/>
    <property type="match status" value="4"/>
</dbReference>
<dbReference type="SUPFAM" id="SSF50978">
    <property type="entry name" value="WD40 repeat-like"/>
    <property type="match status" value="1"/>
</dbReference>
<dbReference type="PROSITE" id="PS50082">
    <property type="entry name" value="WD_REPEATS_2"/>
    <property type="match status" value="1"/>
</dbReference>
<dbReference type="PROSITE" id="PS50294">
    <property type="entry name" value="WD_REPEATS_REGION"/>
    <property type="match status" value="1"/>
</dbReference>
<comment type="function">
    <text evidence="5 6">Scaffold component of the nucleolar structure. Required for localization of DDX21 and NCL to the granular compartment of the nucleolus (PubMed:23848194). Part of the small subunit (SSU) processome, first precursor of the small eukaryotic ribosomal subunit. During the assembly of the SSU processome in the nucleolus, many ribosome biogenesis factors, an RNA chaperone and ribosomal proteins associate with the nascent pre-rRNA and work in concert to generate RNA folding, modifications, rearrangements and cleavage as well as targeted degradation of pre-ribosomal RNA by the RNA exosome (PubMed:34516797).</text>
</comment>
<comment type="subunit">
    <text evidence="5 6">Part of the small subunit (SSU) processome, composed of more than 70 proteins and the RNA chaperone small nucleolar RNA (snoRNA) U3 (PubMed:34516797). Interacts with DDX21, NCL, NOP2 and EBNA1BP2 (PubMed:23848194).</text>
</comment>
<comment type="subcellular location">
    <subcellularLocation>
        <location evidence="5 6">Nucleus</location>
        <location evidence="5 6">Nucleolus</location>
    </subcellularLocation>
</comment>
<sequence>METAPKPGKDVPPKKDKLQTKRKKPRRYWEEETVPTTAGASPGPPRNKKNRELRPQRPKNAYILKKSRISKKPQVPKKPREWKNPESQRGLSGTQDPFPGPAPVPVEVVQKFCRIDKSRKLPHSKAKTRSRLEVAEAEEEETSIKAARSELLLAEEPGFLEGEDGEDTAKICQADIVEAVDIASAAKHFDLNLRQFGPYRLNYSRTGRHLAFGGRRGHVAALDWVTKKLMCEINVMEAVRDIRFLHSEALLAVAQNRWLHIYDNQGIELHCIRRCDRVTRLEFLPFHFLLATASETGFLTYLDVSVGKIVAALNARAGRLDVMSQNPYNAVIHLGHSNGTVSLWSPAMKEPLAKILCHRGGVRAVAVDSTGTYMATSGLDHQLKIFDLRGTYQPLSTRTLPHGAGHLAFSQRGLLVAGMGDVVNIWAGQGKASPPSLEQPYLTHRLSGPVHGLQFCPFEDVLGVGHTGGITSMLVPGAGEPNFDGLESNPYRSRKQRQEWEVKALLEKVPAELICLDPRALAEVDVISLEQGKKEQIERLGYDPQAKAPFQPKPKQKGRSSTASLVKRKRKVMDEEHRDKVRQSLQQQHHKEAKAKPTGARPSALDRFVR</sequence>
<evidence type="ECO:0000256" key="1">
    <source>
        <dbReference type="SAM" id="MobiDB-lite"/>
    </source>
</evidence>
<evidence type="ECO:0000269" key="2">
    <source>
    </source>
</evidence>
<evidence type="ECO:0000269" key="3">
    <source>
    </source>
</evidence>
<evidence type="ECO:0000269" key="4">
    <source>
    </source>
</evidence>
<evidence type="ECO:0000269" key="5">
    <source>
    </source>
</evidence>
<evidence type="ECO:0000269" key="6">
    <source>
    </source>
</evidence>
<evidence type="ECO:0000269" key="7">
    <source>
    </source>
</evidence>
<evidence type="ECO:0007744" key="8">
    <source>
        <dbReference type="PDB" id="7MQ8"/>
    </source>
</evidence>
<evidence type="ECO:0007744" key="9">
    <source>
        <dbReference type="PDB" id="7MQ9"/>
    </source>
</evidence>
<evidence type="ECO:0007744" key="10">
    <source>
        <dbReference type="PDB" id="7MQA"/>
    </source>
</evidence>
<evidence type="ECO:0007744" key="11">
    <source>
    </source>
</evidence>
<evidence type="ECO:0007744" key="12">
    <source>
    </source>
</evidence>
<evidence type="ECO:0007744" key="13">
    <source>
    </source>
</evidence>
<evidence type="ECO:0007744" key="14">
    <source>
    </source>
</evidence>
<keyword id="KW-0002">3D-structure</keyword>
<keyword id="KW-0539">Nucleus</keyword>
<keyword id="KW-0597">Phosphoprotein</keyword>
<keyword id="KW-1267">Proteomics identification</keyword>
<keyword id="KW-1185">Reference proteome</keyword>
<keyword id="KW-0677">Repeat</keyword>
<keyword id="KW-0853">WD repeat</keyword>
<organism>
    <name type="scientific">Homo sapiens</name>
    <name type="common">Human</name>
    <dbReference type="NCBI Taxonomy" id="9606"/>
    <lineage>
        <taxon>Eukaryota</taxon>
        <taxon>Metazoa</taxon>
        <taxon>Chordata</taxon>
        <taxon>Craniata</taxon>
        <taxon>Vertebrata</taxon>
        <taxon>Euteleostomi</taxon>
        <taxon>Mammalia</taxon>
        <taxon>Eutheria</taxon>
        <taxon>Euarchontoglires</taxon>
        <taxon>Primates</taxon>
        <taxon>Haplorrhini</taxon>
        <taxon>Catarrhini</taxon>
        <taxon>Hominidae</taxon>
        <taxon>Homo</taxon>
    </lineage>
</organism>
<name>WDR46_HUMAN</name>
<gene>
    <name type="primary">WDR46</name>
    <name type="synonym">BING4</name>
    <name type="synonym">C6orf11</name>
    <name type="ORF">FP221</name>
</gene>
<proteinExistence type="evidence at protein level"/>
<reference key="1">
    <citation type="journal article" date="2004" name="Proc. Natl. Acad. Sci. U.S.A.">
        <title>Large-scale cDNA transfection screening for genes related to cancer development and progression.</title>
        <authorList>
            <person name="Wan D."/>
            <person name="Gong Y."/>
            <person name="Qin W."/>
            <person name="Zhang P."/>
            <person name="Li J."/>
            <person name="Wei L."/>
            <person name="Zhou X."/>
            <person name="Li H."/>
            <person name="Qiu X."/>
            <person name="Zhong F."/>
            <person name="He L."/>
            <person name="Yu J."/>
            <person name="Yao G."/>
            <person name="Jiang H."/>
            <person name="Qian L."/>
            <person name="Yu Y."/>
            <person name="Shu H."/>
            <person name="Chen X."/>
            <person name="Xu H."/>
            <person name="Guo M."/>
            <person name="Pan Z."/>
            <person name="Chen Y."/>
            <person name="Ge C."/>
            <person name="Yang S."/>
            <person name="Gu J."/>
        </authorList>
    </citation>
    <scope>NUCLEOTIDE SEQUENCE [LARGE SCALE MRNA]</scope>
    <scope>VARIANT ALA-94</scope>
</reference>
<reference key="2">
    <citation type="journal article" date="2003" name="Nature">
        <title>The DNA sequence and analysis of human chromosome 6.</title>
        <authorList>
            <person name="Mungall A.J."/>
            <person name="Palmer S.A."/>
            <person name="Sims S.K."/>
            <person name="Edwards C.A."/>
            <person name="Ashurst J.L."/>
            <person name="Wilming L."/>
            <person name="Jones M.C."/>
            <person name="Horton R."/>
            <person name="Hunt S.E."/>
            <person name="Scott C.E."/>
            <person name="Gilbert J.G.R."/>
            <person name="Clamp M.E."/>
            <person name="Bethel G."/>
            <person name="Milne S."/>
            <person name="Ainscough R."/>
            <person name="Almeida J.P."/>
            <person name="Ambrose K.D."/>
            <person name="Andrews T.D."/>
            <person name="Ashwell R.I.S."/>
            <person name="Babbage A.K."/>
            <person name="Bagguley C.L."/>
            <person name="Bailey J."/>
            <person name="Banerjee R."/>
            <person name="Barker D.J."/>
            <person name="Barlow K.F."/>
            <person name="Bates K."/>
            <person name="Beare D.M."/>
            <person name="Beasley H."/>
            <person name="Beasley O."/>
            <person name="Bird C.P."/>
            <person name="Blakey S.E."/>
            <person name="Bray-Allen S."/>
            <person name="Brook J."/>
            <person name="Brown A.J."/>
            <person name="Brown J.Y."/>
            <person name="Burford D.C."/>
            <person name="Burrill W."/>
            <person name="Burton J."/>
            <person name="Carder C."/>
            <person name="Carter N.P."/>
            <person name="Chapman J.C."/>
            <person name="Clark S.Y."/>
            <person name="Clark G."/>
            <person name="Clee C.M."/>
            <person name="Clegg S."/>
            <person name="Cobley V."/>
            <person name="Collier R.E."/>
            <person name="Collins J.E."/>
            <person name="Colman L.K."/>
            <person name="Corby N.R."/>
            <person name="Coville G.J."/>
            <person name="Culley K.M."/>
            <person name="Dhami P."/>
            <person name="Davies J."/>
            <person name="Dunn M."/>
            <person name="Earthrowl M.E."/>
            <person name="Ellington A.E."/>
            <person name="Evans K.A."/>
            <person name="Faulkner L."/>
            <person name="Francis M.D."/>
            <person name="Frankish A."/>
            <person name="Frankland J."/>
            <person name="French L."/>
            <person name="Garner P."/>
            <person name="Garnett J."/>
            <person name="Ghori M.J."/>
            <person name="Gilby L.M."/>
            <person name="Gillson C.J."/>
            <person name="Glithero R.J."/>
            <person name="Grafham D.V."/>
            <person name="Grant M."/>
            <person name="Gribble S."/>
            <person name="Griffiths C."/>
            <person name="Griffiths M.N.D."/>
            <person name="Hall R."/>
            <person name="Halls K.S."/>
            <person name="Hammond S."/>
            <person name="Harley J.L."/>
            <person name="Hart E.A."/>
            <person name="Heath P.D."/>
            <person name="Heathcott R."/>
            <person name="Holmes S.J."/>
            <person name="Howden P.J."/>
            <person name="Howe K.L."/>
            <person name="Howell G.R."/>
            <person name="Huckle E."/>
            <person name="Humphray S.J."/>
            <person name="Humphries M.D."/>
            <person name="Hunt A.R."/>
            <person name="Johnson C.M."/>
            <person name="Joy A.A."/>
            <person name="Kay M."/>
            <person name="Keenan S.J."/>
            <person name="Kimberley A.M."/>
            <person name="King A."/>
            <person name="Laird G.K."/>
            <person name="Langford C."/>
            <person name="Lawlor S."/>
            <person name="Leongamornlert D.A."/>
            <person name="Leversha M."/>
            <person name="Lloyd C.R."/>
            <person name="Lloyd D.M."/>
            <person name="Loveland J.E."/>
            <person name="Lovell J."/>
            <person name="Martin S."/>
            <person name="Mashreghi-Mohammadi M."/>
            <person name="Maslen G.L."/>
            <person name="Matthews L."/>
            <person name="McCann O.T."/>
            <person name="McLaren S.J."/>
            <person name="McLay K."/>
            <person name="McMurray A."/>
            <person name="Moore M.J.F."/>
            <person name="Mullikin J.C."/>
            <person name="Niblett D."/>
            <person name="Nickerson T."/>
            <person name="Novik K.L."/>
            <person name="Oliver K."/>
            <person name="Overton-Larty E.K."/>
            <person name="Parker A."/>
            <person name="Patel R."/>
            <person name="Pearce A.V."/>
            <person name="Peck A.I."/>
            <person name="Phillimore B.J.C.T."/>
            <person name="Phillips S."/>
            <person name="Plumb R.W."/>
            <person name="Porter K.M."/>
            <person name="Ramsey Y."/>
            <person name="Ranby S.A."/>
            <person name="Rice C.M."/>
            <person name="Ross M.T."/>
            <person name="Searle S.M."/>
            <person name="Sehra H.K."/>
            <person name="Sheridan E."/>
            <person name="Skuce C.D."/>
            <person name="Smith S."/>
            <person name="Smith M."/>
            <person name="Spraggon L."/>
            <person name="Squares S.L."/>
            <person name="Steward C.A."/>
            <person name="Sycamore N."/>
            <person name="Tamlyn-Hall G."/>
            <person name="Tester J."/>
            <person name="Theaker A.J."/>
            <person name="Thomas D.W."/>
            <person name="Thorpe A."/>
            <person name="Tracey A."/>
            <person name="Tromans A."/>
            <person name="Tubby B."/>
            <person name="Wall M."/>
            <person name="Wallis J.M."/>
            <person name="West A.P."/>
            <person name="White S.S."/>
            <person name="Whitehead S.L."/>
            <person name="Whittaker H."/>
            <person name="Wild A."/>
            <person name="Willey D.J."/>
            <person name="Wilmer T.E."/>
            <person name="Wood J.M."/>
            <person name="Wray P.W."/>
            <person name="Wyatt J.C."/>
            <person name="Young L."/>
            <person name="Younger R.M."/>
            <person name="Bentley D.R."/>
            <person name="Coulson A."/>
            <person name="Durbin R.M."/>
            <person name="Hubbard T."/>
            <person name="Sulston J.E."/>
            <person name="Dunham I."/>
            <person name="Rogers J."/>
            <person name="Beck S."/>
        </authorList>
    </citation>
    <scope>NUCLEOTIDE SEQUENCE [LARGE SCALE GENOMIC DNA]</scope>
    <scope>VARIANT ALA-341</scope>
</reference>
<reference key="3">
    <citation type="journal article" date="2004" name="Genome Res.">
        <title>The status, quality, and expansion of the NIH full-length cDNA project: the Mammalian Gene Collection (MGC).</title>
        <authorList>
            <consortium name="The MGC Project Team"/>
        </authorList>
    </citation>
    <scope>NUCLEOTIDE SEQUENCE [LARGE SCALE MRNA]</scope>
    <scope>VARIANT ALA-94</scope>
    <source>
        <tissue>Lung</tissue>
    </source>
</reference>
<reference key="4">
    <citation type="journal article" date="1998" name="J. Mol. Biol.">
        <title>TAPASIN, DAXX, RGL2, HKE2 and four new genes (BING 1, 3 to 5) form a dense cluster at the centromeric end of the MHC.</title>
        <authorList>
            <person name="Herberg J.A."/>
            <person name="Beck S."/>
            <person name="Trowsdale J."/>
        </authorList>
    </citation>
    <scope>NUCLEOTIDE SEQUENCE [GENOMIC DNA] OF 1-372</scope>
    <scope>VARIANT ALA-94</scope>
</reference>
<reference key="5">
    <citation type="journal article" date="2008" name="J. Proteome Res.">
        <title>Combining protein-based IMAC, peptide-based IMAC, and MudPIT for efficient phosphoproteomic analysis.</title>
        <authorList>
            <person name="Cantin G.T."/>
            <person name="Yi W."/>
            <person name="Lu B."/>
            <person name="Park S.K."/>
            <person name="Xu T."/>
            <person name="Lee J.-D."/>
            <person name="Yates J.R. III"/>
        </authorList>
    </citation>
    <scope>PHOSPHORYLATION [LARGE SCALE ANALYSIS] AT SER-41</scope>
    <scope>IDENTIFICATION BY MASS SPECTROMETRY [LARGE SCALE ANALYSIS]</scope>
    <source>
        <tissue>Cervix carcinoma</tissue>
    </source>
</reference>
<reference key="6">
    <citation type="journal article" date="2008" name="Proc. Natl. Acad. Sci. U.S.A.">
        <title>A quantitative atlas of mitotic phosphorylation.</title>
        <authorList>
            <person name="Dephoure N."/>
            <person name="Zhou C."/>
            <person name="Villen J."/>
            <person name="Beausoleil S.A."/>
            <person name="Bakalarski C.E."/>
            <person name="Elledge S.J."/>
            <person name="Gygi S.P."/>
        </authorList>
    </citation>
    <scope>PHOSPHORYLATION [LARGE SCALE ANALYSIS] AT SER-41</scope>
    <scope>IDENTIFICATION BY MASS SPECTROMETRY [LARGE SCALE ANALYSIS]</scope>
    <source>
        <tissue>Cervix carcinoma</tissue>
    </source>
</reference>
<reference key="7">
    <citation type="journal article" date="2013" name="Genes Cells">
        <title>Nucleolar scaffold protein, WDR46, determines the granular compartmental localization of nucleolin and DDX21.</title>
        <authorList>
            <person name="Hirai Y."/>
            <person name="Louvet E."/>
            <person name="Oda T."/>
            <person name="Kumeta M."/>
            <person name="Watanabe Y."/>
            <person name="Horigome T."/>
            <person name="Takeyasu K."/>
        </authorList>
    </citation>
    <scope>FUNCTION</scope>
    <scope>SUBCELLULAR LOCATION</scope>
    <scope>INTERACTION WITH DDX21; NCL; NOP2 AND EBNA1BP2</scope>
</reference>
<reference key="8">
    <citation type="journal article" date="2013" name="J. Proteome Res.">
        <title>Toward a comprehensive characterization of a human cancer cell phosphoproteome.</title>
        <authorList>
            <person name="Zhou H."/>
            <person name="Di Palma S."/>
            <person name="Preisinger C."/>
            <person name="Peng M."/>
            <person name="Polat A.N."/>
            <person name="Heck A.J."/>
            <person name="Mohammed S."/>
        </authorList>
    </citation>
    <scope>PHOSPHORYLATION [LARGE SCALE ANALYSIS] AT SER-41</scope>
    <scope>IDENTIFICATION BY MASS SPECTROMETRY [LARGE SCALE ANALYSIS]</scope>
    <source>
        <tissue>Erythroleukemia</tissue>
    </source>
</reference>
<reference key="9">
    <citation type="journal article" date="2014" name="J. Proteomics">
        <title>An enzyme assisted RP-RPLC approach for in-depth analysis of human liver phosphoproteome.</title>
        <authorList>
            <person name="Bian Y."/>
            <person name="Song C."/>
            <person name="Cheng K."/>
            <person name="Dong M."/>
            <person name="Wang F."/>
            <person name="Huang J."/>
            <person name="Sun D."/>
            <person name="Wang L."/>
            <person name="Ye M."/>
            <person name="Zou H."/>
        </authorList>
    </citation>
    <scope>PHOSPHORYLATION [LARGE SCALE ANALYSIS] AT SER-41</scope>
    <scope>IDENTIFICATION BY MASS SPECTROMETRY [LARGE SCALE ANALYSIS]</scope>
    <source>
        <tissue>Liver</tissue>
    </source>
</reference>
<reference evidence="8 9 10" key="10">
    <citation type="journal article" date="2021" name="Science">
        <title>Nucleolar maturation of the human small subunit processome.</title>
        <authorList>
            <person name="Singh S."/>
            <person name="Vanden Broeck A."/>
            <person name="Miller L."/>
            <person name="Chaker-Margot M."/>
            <person name="Klinge S."/>
        </authorList>
    </citation>
    <scope>STRUCTURE BY ELECTRON MICROSCOPY (2.70 ANGSTROMS)</scope>
    <scope>FUNCTION</scope>
    <scope>SUBUNIT</scope>
    <scope>SUBCELLULAR LOCATION</scope>
</reference>
<protein>
    <recommendedName>
        <fullName>WD repeat-containing protein 46</fullName>
    </recommendedName>
    <alternativeName>
        <fullName>WD repeat-containing protein BING4</fullName>
    </alternativeName>
</protein>
<accession>O15213</accession>
<accession>A6NDP5</accession>
<accession>Q5HYZ0</accession>
<accession>Q5STK5</accession>
<accession>Q5STR3</accession>